<dbReference type="SMR" id="P86153"/>
<dbReference type="GO" id="GO:0005576">
    <property type="term" value="C:extracellular region"/>
    <property type="evidence" value="ECO:0007669"/>
    <property type="project" value="UniProtKB-SubCell"/>
</dbReference>
<dbReference type="GO" id="GO:0042742">
    <property type="term" value="P:defense response to bacterium"/>
    <property type="evidence" value="ECO:0007669"/>
    <property type="project" value="UniProtKB-KW"/>
</dbReference>
<dbReference type="GO" id="GO:0031640">
    <property type="term" value="P:killing of cells of another organism"/>
    <property type="evidence" value="ECO:0007669"/>
    <property type="project" value="UniProtKB-KW"/>
</dbReference>
<dbReference type="InterPro" id="IPR012521">
    <property type="entry name" value="Antimicrobial_frog_2"/>
</dbReference>
<dbReference type="Pfam" id="PF08023">
    <property type="entry name" value="Antimicrobial_2"/>
    <property type="match status" value="1"/>
</dbReference>
<comment type="function">
    <text evidence="1">Shows antibacterial activity against representative Gram-negative and Gram-positive bacterial species, and hemolytic activity.</text>
</comment>
<comment type="subcellular location">
    <subcellularLocation>
        <location evidence="3 4">Secreted</location>
    </subcellularLocation>
</comment>
<comment type="tissue specificity">
    <text evidence="8">Expressed by the skin glands.</text>
</comment>
<comment type="mass spectrometry"/>
<comment type="mass spectrometry"/>
<comment type="similarity">
    <text evidence="2">Belongs to the frog skin active peptide (FSAP) family. Brevinin subfamily.</text>
</comment>
<sequence>GIMDTLKNLAKTAGKGALQSLVKMASCKLSGQC</sequence>
<organism>
    <name type="scientific">Pelophylax ridibundus</name>
    <name type="common">Marsh frog</name>
    <name type="synonym">Rana ridibunda</name>
    <dbReference type="NCBI Taxonomy" id="8406"/>
    <lineage>
        <taxon>Eukaryota</taxon>
        <taxon>Metazoa</taxon>
        <taxon>Chordata</taxon>
        <taxon>Craniata</taxon>
        <taxon>Vertebrata</taxon>
        <taxon>Euteleostomi</taxon>
        <taxon>Amphibia</taxon>
        <taxon>Batrachia</taxon>
        <taxon>Anura</taxon>
        <taxon>Neobatrachia</taxon>
        <taxon>Ranoidea</taxon>
        <taxon>Ranidae</taxon>
        <taxon>Pelophylax</taxon>
    </lineage>
</organism>
<reference evidence="7" key="1">
    <citation type="journal article" date="2008" name="Rapid Commun. Mass Spectrom.">
        <title>De novo sequencing of peptides secreted by the skin glands of the caucasian green frog Rana ridibunda.</title>
        <authorList>
            <person name="Samgina T.Y."/>
            <person name="Artemenko K.A."/>
            <person name="Gorshkov V.A."/>
            <person name="Ogourtsov S.V."/>
            <person name="Zubarev R.A."/>
            <person name="Lebedev A.T."/>
        </authorList>
    </citation>
    <scope>PROTEIN SEQUENCE</scope>
    <scope>MASS SPECTROMETRY</scope>
    <scope>DISULFIDE BOND</scope>
    <source>
        <tissue evidence="5">Skin secretion</tissue>
    </source>
</reference>
<reference key="2">
    <citation type="journal article" date="2017" name="Anal. Bioanal. Chem.">
        <title>Differentiation of frogs from two populations belonging to the Pelophylax esculentus complex by LC-MS/MS comparison of their skin peptidomes.</title>
        <authorList>
            <person name="Samgina T.Y."/>
            <person name="Artemenko K.A."/>
            <person name="Bergquist J."/>
            <person name="Trebse P."/>
            <person name="Torkar G."/>
            <person name="Tolpina M.D."/>
            <person name="Lebedev A.T."/>
        </authorList>
    </citation>
    <scope>PROTEIN SEQUENCE</scope>
    <scope>SUBCELLULAR LOCATION</scope>
    <scope>DISULFIDE BOND</scope>
    <scope>MASS SPECTROMETRY</scope>
    <scope>IDENTIFICATION BY MASS SPECTROMETRY</scope>
    <source>
        <tissue evidence="6">Skin secretion</tissue>
    </source>
</reference>
<proteinExistence type="evidence at protein level"/>
<feature type="peptide" id="PRO_0000361060" description="Brevinin-2Ef" evidence="3 4">
    <location>
        <begin position="1"/>
        <end position="33"/>
    </location>
</feature>
<feature type="disulfide bond" evidence="3 4">
    <location>
        <begin position="27"/>
        <end position="33"/>
    </location>
</feature>
<name>BR2EF_PELRI</name>
<accession>P86153</accession>
<protein>
    <recommendedName>
        <fullName evidence="5">Brevinin-2Ef</fullName>
    </recommendedName>
</protein>
<evidence type="ECO:0000250" key="1">
    <source>
        <dbReference type="UniProtKB" id="P40842"/>
    </source>
</evidence>
<evidence type="ECO:0000255" key="2"/>
<evidence type="ECO:0000269" key="3">
    <source>
    </source>
</evidence>
<evidence type="ECO:0000269" key="4">
    <source>
    </source>
</evidence>
<evidence type="ECO:0000303" key="5">
    <source>
    </source>
</evidence>
<evidence type="ECO:0000303" key="6">
    <source>
    </source>
</evidence>
<evidence type="ECO:0000305" key="7"/>
<evidence type="ECO:0000305" key="8">
    <source>
    </source>
</evidence>
<keyword id="KW-0878">Amphibian defense peptide</keyword>
<keyword id="KW-0044">Antibiotic</keyword>
<keyword id="KW-0929">Antimicrobial</keyword>
<keyword id="KW-0204">Cytolysis</keyword>
<keyword id="KW-0903">Direct protein sequencing</keyword>
<keyword id="KW-1015">Disulfide bond</keyword>
<keyword id="KW-0354">Hemolysis</keyword>
<keyword id="KW-0964">Secreted</keyword>